<protein>
    <recommendedName>
        <fullName evidence="1">Ribosomal RNA small subunit methyltransferase H</fullName>
        <ecNumber evidence="1">2.1.1.199</ecNumber>
    </recommendedName>
    <alternativeName>
        <fullName evidence="1">16S rRNA m(4)C1402 methyltransferase</fullName>
    </alternativeName>
    <alternativeName>
        <fullName evidence="1">rRNA (cytosine-N(4)-)-methyltransferase RsmH</fullName>
    </alternativeName>
</protein>
<reference key="1">
    <citation type="submission" date="2009-07" db="EMBL/GenBank/DDBJ databases">
        <title>Complete sequence of Pectobacterium carotovorum subsp. carotovorum PC1.</title>
        <authorList>
            <consortium name="US DOE Joint Genome Institute"/>
            <person name="Lucas S."/>
            <person name="Copeland A."/>
            <person name="Lapidus A."/>
            <person name="Glavina del Rio T."/>
            <person name="Tice H."/>
            <person name="Bruce D."/>
            <person name="Goodwin L."/>
            <person name="Pitluck S."/>
            <person name="Munk A.C."/>
            <person name="Brettin T."/>
            <person name="Detter J.C."/>
            <person name="Han C."/>
            <person name="Tapia R."/>
            <person name="Larimer F."/>
            <person name="Land M."/>
            <person name="Hauser L."/>
            <person name="Kyrpides N."/>
            <person name="Mikhailova N."/>
            <person name="Balakrishnan V."/>
            <person name="Glasner J."/>
            <person name="Perna N.T."/>
        </authorList>
    </citation>
    <scope>NUCLEOTIDE SEQUENCE [LARGE SCALE GENOMIC DNA]</scope>
    <source>
        <strain>PC1</strain>
    </source>
</reference>
<evidence type="ECO:0000255" key="1">
    <source>
        <dbReference type="HAMAP-Rule" id="MF_01007"/>
    </source>
</evidence>
<accession>C6DEV1</accession>
<feature type="chain" id="PRO_0000387022" description="Ribosomal RNA small subunit methyltransferase H">
    <location>
        <begin position="1"/>
        <end position="314"/>
    </location>
</feature>
<feature type="binding site" evidence="1">
    <location>
        <begin position="35"/>
        <end position="37"/>
    </location>
    <ligand>
        <name>S-adenosyl-L-methionine</name>
        <dbReference type="ChEBI" id="CHEBI:59789"/>
    </ligand>
</feature>
<feature type="binding site" evidence="1">
    <location>
        <position position="55"/>
    </location>
    <ligand>
        <name>S-adenosyl-L-methionine</name>
        <dbReference type="ChEBI" id="CHEBI:59789"/>
    </ligand>
</feature>
<feature type="binding site" evidence="1">
    <location>
        <position position="79"/>
    </location>
    <ligand>
        <name>S-adenosyl-L-methionine</name>
        <dbReference type="ChEBI" id="CHEBI:59789"/>
    </ligand>
</feature>
<feature type="binding site" evidence="1">
    <location>
        <position position="101"/>
    </location>
    <ligand>
        <name>S-adenosyl-L-methionine</name>
        <dbReference type="ChEBI" id="CHEBI:59789"/>
    </ligand>
</feature>
<feature type="binding site" evidence="1">
    <location>
        <position position="108"/>
    </location>
    <ligand>
        <name>S-adenosyl-L-methionine</name>
        <dbReference type="ChEBI" id="CHEBI:59789"/>
    </ligand>
</feature>
<proteinExistence type="inferred from homology"/>
<keyword id="KW-0963">Cytoplasm</keyword>
<keyword id="KW-0489">Methyltransferase</keyword>
<keyword id="KW-0698">rRNA processing</keyword>
<keyword id="KW-0949">S-adenosyl-L-methionine</keyword>
<keyword id="KW-0808">Transferase</keyword>
<dbReference type="EC" id="2.1.1.199" evidence="1"/>
<dbReference type="EMBL" id="CP001657">
    <property type="protein sequence ID" value="ACT14615.1"/>
    <property type="molecule type" value="Genomic_DNA"/>
</dbReference>
<dbReference type="RefSeq" id="WP_015841732.1">
    <property type="nucleotide sequence ID" value="NC_012917.1"/>
</dbReference>
<dbReference type="SMR" id="C6DEV1"/>
<dbReference type="STRING" id="561230.PC1_3600"/>
<dbReference type="GeneID" id="67792593"/>
<dbReference type="KEGG" id="pct:PC1_3600"/>
<dbReference type="eggNOG" id="COG0275">
    <property type="taxonomic scope" value="Bacteria"/>
</dbReference>
<dbReference type="HOGENOM" id="CLU_038422_2_0_6"/>
<dbReference type="OrthoDB" id="9806637at2"/>
<dbReference type="Proteomes" id="UP000002736">
    <property type="component" value="Chromosome"/>
</dbReference>
<dbReference type="GO" id="GO:0005737">
    <property type="term" value="C:cytoplasm"/>
    <property type="evidence" value="ECO:0007669"/>
    <property type="project" value="UniProtKB-SubCell"/>
</dbReference>
<dbReference type="GO" id="GO:0071424">
    <property type="term" value="F:rRNA (cytosine-N4-)-methyltransferase activity"/>
    <property type="evidence" value="ECO:0007669"/>
    <property type="project" value="UniProtKB-UniRule"/>
</dbReference>
<dbReference type="GO" id="GO:0070475">
    <property type="term" value="P:rRNA base methylation"/>
    <property type="evidence" value="ECO:0007669"/>
    <property type="project" value="UniProtKB-UniRule"/>
</dbReference>
<dbReference type="FunFam" id="1.10.150.170:FF:000001">
    <property type="entry name" value="Ribosomal RNA small subunit methyltransferase H"/>
    <property type="match status" value="1"/>
</dbReference>
<dbReference type="Gene3D" id="1.10.150.170">
    <property type="entry name" value="Putative methyltransferase TM0872, insert domain"/>
    <property type="match status" value="1"/>
</dbReference>
<dbReference type="Gene3D" id="3.40.50.150">
    <property type="entry name" value="Vaccinia Virus protein VP39"/>
    <property type="match status" value="1"/>
</dbReference>
<dbReference type="HAMAP" id="MF_01007">
    <property type="entry name" value="16SrRNA_methyltr_H"/>
    <property type="match status" value="1"/>
</dbReference>
<dbReference type="InterPro" id="IPR002903">
    <property type="entry name" value="RsmH"/>
</dbReference>
<dbReference type="InterPro" id="IPR023397">
    <property type="entry name" value="SAM-dep_MeTrfase_MraW_recog"/>
</dbReference>
<dbReference type="InterPro" id="IPR029063">
    <property type="entry name" value="SAM-dependent_MTases_sf"/>
</dbReference>
<dbReference type="NCBIfam" id="TIGR00006">
    <property type="entry name" value="16S rRNA (cytosine(1402)-N(4))-methyltransferase RsmH"/>
    <property type="match status" value="1"/>
</dbReference>
<dbReference type="PANTHER" id="PTHR11265:SF0">
    <property type="entry name" value="12S RRNA N4-METHYLCYTIDINE METHYLTRANSFERASE"/>
    <property type="match status" value="1"/>
</dbReference>
<dbReference type="PANTHER" id="PTHR11265">
    <property type="entry name" value="S-ADENOSYL-METHYLTRANSFERASE MRAW"/>
    <property type="match status" value="1"/>
</dbReference>
<dbReference type="Pfam" id="PF01795">
    <property type="entry name" value="Methyltransf_5"/>
    <property type="match status" value="1"/>
</dbReference>
<dbReference type="PIRSF" id="PIRSF004486">
    <property type="entry name" value="MraW"/>
    <property type="match status" value="1"/>
</dbReference>
<dbReference type="SUPFAM" id="SSF81799">
    <property type="entry name" value="Putative methyltransferase TM0872, insert domain"/>
    <property type="match status" value="1"/>
</dbReference>
<dbReference type="SUPFAM" id="SSF53335">
    <property type="entry name" value="S-adenosyl-L-methionine-dependent methyltransferases"/>
    <property type="match status" value="1"/>
</dbReference>
<comment type="function">
    <text evidence="1">Specifically methylates the N4 position of cytidine in position 1402 (C1402) of 16S rRNA.</text>
</comment>
<comment type="catalytic activity">
    <reaction evidence="1">
        <text>cytidine(1402) in 16S rRNA + S-adenosyl-L-methionine = N(4)-methylcytidine(1402) in 16S rRNA + S-adenosyl-L-homocysteine + H(+)</text>
        <dbReference type="Rhea" id="RHEA:42928"/>
        <dbReference type="Rhea" id="RHEA-COMP:10286"/>
        <dbReference type="Rhea" id="RHEA-COMP:10287"/>
        <dbReference type="ChEBI" id="CHEBI:15378"/>
        <dbReference type="ChEBI" id="CHEBI:57856"/>
        <dbReference type="ChEBI" id="CHEBI:59789"/>
        <dbReference type="ChEBI" id="CHEBI:74506"/>
        <dbReference type="ChEBI" id="CHEBI:82748"/>
        <dbReference type="EC" id="2.1.1.199"/>
    </reaction>
</comment>
<comment type="subcellular location">
    <subcellularLocation>
        <location evidence="1">Cytoplasm</location>
    </subcellularLocation>
</comment>
<comment type="similarity">
    <text evidence="1">Belongs to the methyltransferase superfamily. RsmH family.</text>
</comment>
<gene>
    <name evidence="1" type="primary">rsmH</name>
    <name type="synonym">mraW</name>
    <name type="ordered locus">PC1_3600</name>
</gene>
<organism>
    <name type="scientific">Pectobacterium carotovorum subsp. carotovorum (strain PC1)</name>
    <dbReference type="NCBI Taxonomy" id="561230"/>
    <lineage>
        <taxon>Bacteria</taxon>
        <taxon>Pseudomonadati</taxon>
        <taxon>Pseudomonadota</taxon>
        <taxon>Gammaproteobacteria</taxon>
        <taxon>Enterobacterales</taxon>
        <taxon>Pectobacteriaceae</taxon>
        <taxon>Pectobacterium</taxon>
    </lineage>
</organism>
<name>RSMH_PECCP</name>
<sequence>MLENYKHTTVLLDEAVNGLNIRSGGIYIDGTFGRGGHSRLILSQLGPEGRLLAIDRDPQAIEAAKAIDDPRFSIIHGPFSAMAEYVAELGLTGQIDGVLLDLGVSSPQLDDPERGFSFMRDGPLDMRMDPTRGLSAAEWLMKAEADDIVWVLKTFGEERFAKRIARAIVERNRTEPMTRTKELAELIAAASPVREKHKHPATRSFQAIRIYINSELEEIERALEGALSVLAPQGRLSVISFHSLEDRIVKRFIRHQSRGPQVPAGLPLTEEQLRSQGGQTLKAVGKKLMPSEAEVAENPRARSSVLRFAERLPA</sequence>